<evidence type="ECO:0000250" key="1"/>
<evidence type="ECO:0000250" key="2">
    <source>
        <dbReference type="UniProtKB" id="P47708"/>
    </source>
</evidence>
<evidence type="ECO:0000250" key="3">
    <source>
        <dbReference type="UniProtKB" id="P47709"/>
    </source>
</evidence>
<evidence type="ECO:0000255" key="4">
    <source>
        <dbReference type="PROSITE-ProRule" id="PRU00041"/>
    </source>
</evidence>
<evidence type="ECO:0000255" key="5">
    <source>
        <dbReference type="PROSITE-ProRule" id="PRU00091"/>
    </source>
</evidence>
<evidence type="ECO:0000255" key="6">
    <source>
        <dbReference type="PROSITE-ProRule" id="PRU00234"/>
    </source>
</evidence>
<evidence type="ECO:0000256" key="7">
    <source>
        <dbReference type="SAM" id="MobiDB-lite"/>
    </source>
</evidence>
<evidence type="ECO:0000269" key="8">
    <source>
    </source>
</evidence>
<evidence type="ECO:0000303" key="9">
    <source>
    </source>
</evidence>
<evidence type="ECO:0000305" key="10"/>
<gene>
    <name type="primary">RPH3A</name>
    <name type="synonym">KIAA0985</name>
</gene>
<keyword id="KW-0025">Alternative splicing</keyword>
<keyword id="KW-0106">Calcium</keyword>
<keyword id="KW-1003">Cell membrane</keyword>
<keyword id="KW-0966">Cell projection</keyword>
<keyword id="KW-0968">Cytoplasmic vesicle</keyword>
<keyword id="KW-0446">Lipid-binding</keyword>
<keyword id="KW-0472">Membrane</keyword>
<keyword id="KW-0479">Metal-binding</keyword>
<keyword id="KW-0488">Methylation</keyword>
<keyword id="KW-0597">Phosphoprotein</keyword>
<keyword id="KW-0628">Postsynaptic cell membrane</keyword>
<keyword id="KW-0653">Protein transport</keyword>
<keyword id="KW-1267">Proteomics identification</keyword>
<keyword id="KW-1185">Reference proteome</keyword>
<keyword id="KW-0677">Repeat</keyword>
<keyword id="KW-0770">Synapse</keyword>
<keyword id="KW-0813">Transport</keyword>
<keyword id="KW-0832">Ubl conjugation</keyword>
<keyword id="KW-0862">Zinc</keyword>
<keyword id="KW-0863">Zinc-finger</keyword>
<organism>
    <name type="scientific">Homo sapiens</name>
    <name type="common">Human</name>
    <dbReference type="NCBI Taxonomy" id="9606"/>
    <lineage>
        <taxon>Eukaryota</taxon>
        <taxon>Metazoa</taxon>
        <taxon>Chordata</taxon>
        <taxon>Craniata</taxon>
        <taxon>Vertebrata</taxon>
        <taxon>Euteleostomi</taxon>
        <taxon>Mammalia</taxon>
        <taxon>Eutheria</taxon>
        <taxon>Euarchontoglires</taxon>
        <taxon>Primates</taxon>
        <taxon>Haplorrhini</taxon>
        <taxon>Catarrhini</taxon>
        <taxon>Hominidae</taxon>
        <taxon>Homo</taxon>
    </lineage>
</organism>
<accession>Q9Y2J0</accession>
<accession>B7Z3C3</accession>
<accession>Q96AE0</accession>
<feature type="chain" id="PRO_0000190227" description="Rabphilin-3A">
    <location>
        <begin position="1"/>
        <end position="694"/>
    </location>
</feature>
<feature type="domain" description="RabBD" evidence="6">
    <location>
        <begin position="44"/>
        <end position="160"/>
    </location>
</feature>
<feature type="domain" description="C2 1" evidence="4">
    <location>
        <begin position="392"/>
        <end position="514"/>
    </location>
</feature>
<feature type="domain" description="C2 2" evidence="4">
    <location>
        <begin position="550"/>
        <end position="683"/>
    </location>
</feature>
<feature type="zinc finger region" description="FYVE-type" evidence="5">
    <location>
        <begin position="92"/>
        <end position="148"/>
    </location>
</feature>
<feature type="region of interest" description="Disordered" evidence="7">
    <location>
        <begin position="1"/>
        <end position="51"/>
    </location>
</feature>
<feature type="region of interest" description="Disordered" evidence="7">
    <location>
        <begin position="166"/>
        <end position="388"/>
    </location>
</feature>
<feature type="compositionally biased region" description="Polar residues" evidence="7">
    <location>
        <begin position="1"/>
        <end position="12"/>
    </location>
</feature>
<feature type="compositionally biased region" description="Low complexity" evidence="7">
    <location>
        <begin position="177"/>
        <end position="186"/>
    </location>
</feature>
<feature type="compositionally biased region" description="Basic and acidic residues" evidence="7">
    <location>
        <begin position="202"/>
        <end position="211"/>
    </location>
</feature>
<feature type="compositionally biased region" description="Low complexity" evidence="7">
    <location>
        <begin position="352"/>
        <end position="370"/>
    </location>
</feature>
<feature type="compositionally biased region" description="Acidic residues" evidence="7">
    <location>
        <begin position="375"/>
        <end position="388"/>
    </location>
</feature>
<feature type="binding site" evidence="5">
    <location>
        <position position="98"/>
    </location>
    <ligand>
        <name>Zn(2+)</name>
        <dbReference type="ChEBI" id="CHEBI:29105"/>
        <label>1</label>
    </ligand>
</feature>
<feature type="binding site" evidence="5">
    <location>
        <position position="101"/>
    </location>
    <ligand>
        <name>Zn(2+)</name>
        <dbReference type="ChEBI" id="CHEBI:29105"/>
        <label>1</label>
    </ligand>
</feature>
<feature type="binding site" evidence="5">
    <location>
        <position position="115"/>
    </location>
    <ligand>
        <name>Zn(2+)</name>
        <dbReference type="ChEBI" id="CHEBI:29105"/>
        <label>2</label>
    </ligand>
</feature>
<feature type="binding site" evidence="5">
    <location>
        <position position="118"/>
    </location>
    <ligand>
        <name>Zn(2+)</name>
        <dbReference type="ChEBI" id="CHEBI:29105"/>
        <label>2</label>
    </ligand>
</feature>
<feature type="binding site" evidence="5">
    <location>
        <position position="123"/>
    </location>
    <ligand>
        <name>Zn(2+)</name>
        <dbReference type="ChEBI" id="CHEBI:29105"/>
        <label>1</label>
    </ligand>
</feature>
<feature type="binding site" evidence="5">
    <location>
        <position position="126"/>
    </location>
    <ligand>
        <name>Zn(2+)</name>
        <dbReference type="ChEBI" id="CHEBI:29105"/>
        <label>1</label>
    </ligand>
</feature>
<feature type="binding site" evidence="5">
    <location>
        <position position="140"/>
    </location>
    <ligand>
        <name>Zn(2+)</name>
        <dbReference type="ChEBI" id="CHEBI:29105"/>
        <label>2</label>
    </ligand>
</feature>
<feature type="binding site" evidence="5">
    <location>
        <position position="143"/>
    </location>
    <ligand>
        <name>Zn(2+)</name>
        <dbReference type="ChEBI" id="CHEBI:29105"/>
        <label>2</label>
    </ligand>
</feature>
<feature type="binding site" evidence="2">
    <location>
        <position position="422"/>
    </location>
    <ligand>
        <name>Ca(2+)</name>
        <dbReference type="ChEBI" id="CHEBI:29108"/>
        <label>1</label>
    </ligand>
</feature>
<feature type="binding site" evidence="2">
    <location>
        <position position="423"/>
    </location>
    <ligand>
        <name>Ca(2+)</name>
        <dbReference type="ChEBI" id="CHEBI:29108"/>
        <label>1</label>
    </ligand>
</feature>
<feature type="binding site" evidence="2">
    <location>
        <position position="423"/>
    </location>
    <ligand>
        <name>Ca(2+)</name>
        <dbReference type="ChEBI" id="CHEBI:29108"/>
        <label>2</label>
    </ligand>
</feature>
<feature type="binding site" evidence="2">
    <location>
        <position position="429"/>
    </location>
    <ligand>
        <name>Ca(2+)</name>
        <dbReference type="ChEBI" id="CHEBI:29108"/>
        <label>2</label>
    </ligand>
</feature>
<feature type="binding site" evidence="2">
    <location>
        <position position="484"/>
    </location>
    <ligand>
        <name>Ca(2+)</name>
        <dbReference type="ChEBI" id="CHEBI:29108"/>
        <label>1</label>
    </ligand>
</feature>
<feature type="binding site" evidence="2">
    <location>
        <position position="484"/>
    </location>
    <ligand>
        <name>Ca(2+)</name>
        <dbReference type="ChEBI" id="CHEBI:29108"/>
        <label>2</label>
    </ligand>
</feature>
<feature type="binding site" evidence="2">
    <location>
        <position position="485"/>
    </location>
    <ligand>
        <name>Ca(2+)</name>
        <dbReference type="ChEBI" id="CHEBI:29108"/>
        <label>2</label>
    </ligand>
</feature>
<feature type="binding site" evidence="2">
    <location>
        <position position="486"/>
    </location>
    <ligand>
        <name>Ca(2+)</name>
        <dbReference type="ChEBI" id="CHEBI:29108"/>
        <label>1</label>
    </ligand>
</feature>
<feature type="binding site" evidence="2">
    <location>
        <position position="486"/>
    </location>
    <ligand>
        <name>Ca(2+)</name>
        <dbReference type="ChEBI" id="CHEBI:29108"/>
        <label>2</label>
    </ligand>
</feature>
<feature type="binding site" evidence="2">
    <location>
        <position position="492"/>
    </location>
    <ligand>
        <name>Ca(2+)</name>
        <dbReference type="ChEBI" id="CHEBI:29108"/>
        <label>1</label>
    </ligand>
</feature>
<feature type="binding site" evidence="3">
    <location>
        <position position="539"/>
    </location>
    <ligand>
        <name>Ca(2+)</name>
        <dbReference type="ChEBI" id="CHEBI:29108"/>
        <label>3</label>
    </ligand>
</feature>
<feature type="binding site" evidence="3">
    <location>
        <position position="581"/>
    </location>
    <ligand>
        <name>Ca(2+)</name>
        <dbReference type="ChEBI" id="CHEBI:29108"/>
        <label>3</label>
    </ligand>
</feature>
<feature type="binding site" evidence="3">
    <location>
        <position position="581"/>
    </location>
    <ligand>
        <name>Ca(2+)</name>
        <dbReference type="ChEBI" id="CHEBI:29108"/>
        <label>4</label>
    </ligand>
</feature>
<feature type="binding site" evidence="3">
    <location>
        <position position="587"/>
    </location>
    <ligand>
        <name>Ca(2+)</name>
        <dbReference type="ChEBI" id="CHEBI:29108"/>
        <label>3</label>
    </ligand>
</feature>
<feature type="binding site" evidence="3">
    <location>
        <position position="641"/>
    </location>
    <ligand>
        <name>Ca(2+)</name>
        <dbReference type="ChEBI" id="CHEBI:29108"/>
        <label>3</label>
    </ligand>
</feature>
<feature type="binding site" evidence="3">
    <location>
        <position position="641"/>
    </location>
    <ligand>
        <name>Ca(2+)</name>
        <dbReference type="ChEBI" id="CHEBI:29108"/>
        <label>4</label>
    </ligand>
</feature>
<feature type="binding site" evidence="3">
    <location>
        <position position="642"/>
    </location>
    <ligand>
        <name>Ca(2+)</name>
        <dbReference type="ChEBI" id="CHEBI:29108"/>
        <label>3</label>
    </ligand>
</feature>
<feature type="binding site" evidence="3">
    <location>
        <position position="643"/>
    </location>
    <ligand>
        <name>Ca(2+)</name>
        <dbReference type="ChEBI" id="CHEBI:29108"/>
        <label>3</label>
    </ligand>
</feature>
<feature type="binding site" evidence="3">
    <location>
        <position position="643"/>
    </location>
    <ligand>
        <name>Ca(2+)</name>
        <dbReference type="ChEBI" id="CHEBI:29108"/>
        <label>4</label>
    </ligand>
</feature>
<feature type="binding site" evidence="3">
    <location>
        <position position="649"/>
    </location>
    <ligand>
        <name>Ca(2+)</name>
        <dbReference type="ChEBI" id="CHEBI:29108"/>
        <label>4</label>
    </ligand>
</feature>
<feature type="modified residue" description="Omega-N-methylarginine" evidence="2">
    <location>
        <position position="226"/>
    </location>
</feature>
<feature type="modified residue" description="Phosphoserine" evidence="2">
    <location>
        <position position="272"/>
    </location>
</feature>
<feature type="modified residue" description="Phosphoserine" evidence="3">
    <location>
        <position position="692"/>
    </location>
</feature>
<feature type="modified residue" description="Phosphoserine" evidence="3">
    <location>
        <position position="693"/>
    </location>
</feature>
<feature type="splice variant" id="VSP_021016" description="In isoform 2." evidence="9">
    <original>NDKEQ</original>
    <variation>K</variation>
    <location>
        <begin position="24"/>
        <end position="28"/>
    </location>
</feature>
<proteinExistence type="evidence at protein level"/>
<name>RP3A_HUMAN</name>
<dbReference type="EMBL" id="AB023202">
    <property type="protein sequence ID" value="BAA76829.2"/>
    <property type="status" value="ALT_INIT"/>
    <property type="molecule type" value="mRNA"/>
</dbReference>
<dbReference type="EMBL" id="AK295696">
    <property type="protein sequence ID" value="BAH12159.1"/>
    <property type="molecule type" value="mRNA"/>
</dbReference>
<dbReference type="EMBL" id="BC017259">
    <property type="protein sequence ID" value="AAH17259.1"/>
    <property type="molecule type" value="mRNA"/>
</dbReference>
<dbReference type="CCDS" id="CCDS31904.1">
    <molecule id="Q9Y2J0-2"/>
</dbReference>
<dbReference type="CCDS" id="CCDS44979.1">
    <molecule id="Q9Y2J0-1"/>
</dbReference>
<dbReference type="RefSeq" id="NP_001137326.1">
    <molecule id="Q9Y2J0-1"/>
    <property type="nucleotide sequence ID" value="NM_001143854.2"/>
</dbReference>
<dbReference type="RefSeq" id="NP_001334881.1">
    <molecule id="Q9Y2J0-1"/>
    <property type="nucleotide sequence ID" value="NM_001347952.2"/>
</dbReference>
<dbReference type="RefSeq" id="NP_001334882.1">
    <molecule id="Q9Y2J0-1"/>
    <property type="nucleotide sequence ID" value="NM_001347953.1"/>
</dbReference>
<dbReference type="RefSeq" id="NP_001334883.1">
    <molecule id="Q9Y2J0-1"/>
    <property type="nucleotide sequence ID" value="NM_001347954.2"/>
</dbReference>
<dbReference type="RefSeq" id="NP_055769.2">
    <molecule id="Q9Y2J0-2"/>
    <property type="nucleotide sequence ID" value="NM_014954.3"/>
</dbReference>
<dbReference type="RefSeq" id="XP_047284496.1">
    <molecule id="Q9Y2J0-2"/>
    <property type="nucleotide sequence ID" value="XM_047428540.1"/>
</dbReference>
<dbReference type="RefSeq" id="XP_054227429.1">
    <molecule id="Q9Y2J0-1"/>
    <property type="nucleotide sequence ID" value="XM_054371454.1"/>
</dbReference>
<dbReference type="RefSeq" id="XP_054227430.1">
    <molecule id="Q9Y2J0-2"/>
    <property type="nucleotide sequence ID" value="XM_054371455.1"/>
</dbReference>
<dbReference type="SMR" id="Q9Y2J0"/>
<dbReference type="BioGRID" id="116560">
    <property type="interactions" value="27"/>
</dbReference>
<dbReference type="FunCoup" id="Q9Y2J0">
    <property type="interactions" value="221"/>
</dbReference>
<dbReference type="IntAct" id="Q9Y2J0">
    <property type="interactions" value="16"/>
</dbReference>
<dbReference type="MINT" id="Q9Y2J0"/>
<dbReference type="STRING" id="9606.ENSP00000374036"/>
<dbReference type="GlyGen" id="Q9Y2J0">
    <property type="glycosylation" value="1 site"/>
</dbReference>
<dbReference type="iPTMnet" id="Q9Y2J0"/>
<dbReference type="PhosphoSitePlus" id="Q9Y2J0"/>
<dbReference type="SwissPalm" id="Q9Y2J0"/>
<dbReference type="BioMuta" id="RPH3A"/>
<dbReference type="DMDM" id="13878745"/>
<dbReference type="MassIVE" id="Q9Y2J0"/>
<dbReference type="PaxDb" id="9606-ENSP00000374036"/>
<dbReference type="PeptideAtlas" id="Q9Y2J0"/>
<dbReference type="ProteomicsDB" id="85809">
    <molecule id="Q9Y2J0-1"/>
</dbReference>
<dbReference type="ProteomicsDB" id="85810">
    <molecule id="Q9Y2J0-2"/>
</dbReference>
<dbReference type="Antibodypedia" id="996">
    <property type="antibodies" value="278 antibodies from 34 providers"/>
</dbReference>
<dbReference type="DNASU" id="22895"/>
<dbReference type="Ensembl" id="ENST00000389385.9">
    <molecule id="Q9Y2J0-1"/>
    <property type="protein sequence ID" value="ENSP00000374036.4"/>
    <property type="gene ID" value="ENSG00000089169.15"/>
</dbReference>
<dbReference type="Ensembl" id="ENST00000415485.7">
    <molecule id="Q9Y2J0-1"/>
    <property type="protein sequence ID" value="ENSP00000405357.3"/>
    <property type="gene ID" value="ENSG00000089169.15"/>
</dbReference>
<dbReference type="Ensembl" id="ENST00000543106.6">
    <molecule id="Q9Y2J0-1"/>
    <property type="protein sequence ID" value="ENSP00000440384.2"/>
    <property type="gene ID" value="ENSG00000089169.15"/>
</dbReference>
<dbReference type="Ensembl" id="ENST00000551052.5">
    <molecule id="Q9Y2J0-2"/>
    <property type="protein sequence ID" value="ENSP00000448297.1"/>
    <property type="gene ID" value="ENSG00000089169.15"/>
</dbReference>
<dbReference type="GeneID" id="22895"/>
<dbReference type="KEGG" id="hsa:22895"/>
<dbReference type="MANE-Select" id="ENST00000389385.9">
    <property type="protein sequence ID" value="ENSP00000374036.4"/>
    <property type="RefSeq nucleotide sequence ID" value="NM_001143854.2"/>
    <property type="RefSeq protein sequence ID" value="NP_001137326.1"/>
</dbReference>
<dbReference type="UCSC" id="uc001tty.4">
    <molecule id="Q9Y2J0-1"/>
    <property type="organism name" value="human"/>
</dbReference>
<dbReference type="AGR" id="HGNC:17056"/>
<dbReference type="CTD" id="22895"/>
<dbReference type="DisGeNET" id="22895"/>
<dbReference type="GeneCards" id="RPH3A"/>
<dbReference type="HGNC" id="HGNC:17056">
    <property type="gene designation" value="RPH3A"/>
</dbReference>
<dbReference type="HPA" id="ENSG00000089169">
    <property type="expression patterns" value="Tissue enriched (brain)"/>
</dbReference>
<dbReference type="MalaCards" id="RPH3A"/>
<dbReference type="MIM" id="612159">
    <property type="type" value="gene"/>
</dbReference>
<dbReference type="neXtProt" id="NX_Q9Y2J0"/>
<dbReference type="OpenTargets" id="ENSG00000089169"/>
<dbReference type="PharmGKB" id="PA134886118"/>
<dbReference type="VEuPathDB" id="HostDB:ENSG00000089169"/>
<dbReference type="eggNOG" id="KOG1013">
    <property type="taxonomic scope" value="Eukaryota"/>
</dbReference>
<dbReference type="GeneTree" id="ENSGT00940000157468"/>
<dbReference type="HOGENOM" id="CLU_011461_2_0_1"/>
<dbReference type="InParanoid" id="Q9Y2J0"/>
<dbReference type="OMA" id="IRYHTSE"/>
<dbReference type="OrthoDB" id="270970at2759"/>
<dbReference type="PAN-GO" id="Q9Y2J0">
    <property type="GO annotations" value="7 GO annotations based on evolutionary models"/>
</dbReference>
<dbReference type="PhylomeDB" id="Q9Y2J0"/>
<dbReference type="TreeFam" id="TF351844"/>
<dbReference type="PathwayCommons" id="Q9Y2J0"/>
<dbReference type="SignaLink" id="Q9Y2J0"/>
<dbReference type="BioGRID-ORCS" id="22895">
    <property type="hits" value="10 hits in 1144 CRISPR screens"/>
</dbReference>
<dbReference type="CD-CODE" id="FB4E32DD">
    <property type="entry name" value="Presynaptic clusters and postsynaptic densities"/>
</dbReference>
<dbReference type="ChiTaRS" id="RPH3A">
    <property type="organism name" value="human"/>
</dbReference>
<dbReference type="GeneWiki" id="RPH3A"/>
<dbReference type="GenomeRNAi" id="22895"/>
<dbReference type="Pharos" id="Q9Y2J0">
    <property type="development level" value="Tbio"/>
</dbReference>
<dbReference type="PRO" id="PR:Q9Y2J0"/>
<dbReference type="Proteomes" id="UP000005640">
    <property type="component" value="Chromosome 12"/>
</dbReference>
<dbReference type="RNAct" id="Q9Y2J0">
    <property type="molecule type" value="protein"/>
</dbReference>
<dbReference type="Bgee" id="ENSG00000089169">
    <property type="expression patterns" value="Expressed in right frontal lobe and 136 other cell types or tissues"/>
</dbReference>
<dbReference type="ExpressionAtlas" id="Q9Y2J0">
    <property type="expression patterns" value="baseline and differential"/>
</dbReference>
<dbReference type="GO" id="GO:0043197">
    <property type="term" value="C:dendritic spine"/>
    <property type="evidence" value="ECO:0007669"/>
    <property type="project" value="UniProtKB-SubCell"/>
</dbReference>
<dbReference type="GO" id="GO:0019898">
    <property type="term" value="C:extrinsic component of membrane"/>
    <property type="evidence" value="ECO:0000250"/>
    <property type="project" value="ParkinsonsUK-UCL"/>
</dbReference>
<dbReference type="GO" id="GO:0098850">
    <property type="term" value="C:extrinsic component of synaptic vesicle membrane"/>
    <property type="evidence" value="ECO:0000318"/>
    <property type="project" value="GO_Central"/>
</dbReference>
<dbReference type="GO" id="GO:0043005">
    <property type="term" value="C:neuron projection"/>
    <property type="evidence" value="ECO:0000250"/>
    <property type="project" value="ParkinsonsUK-UCL"/>
</dbReference>
<dbReference type="GO" id="GO:0045211">
    <property type="term" value="C:postsynaptic membrane"/>
    <property type="evidence" value="ECO:0000318"/>
    <property type="project" value="GO_Central"/>
</dbReference>
<dbReference type="GO" id="GO:0032991">
    <property type="term" value="C:protein-containing complex"/>
    <property type="evidence" value="ECO:0000250"/>
    <property type="project" value="ParkinsonsUK-UCL"/>
</dbReference>
<dbReference type="GO" id="GO:0030141">
    <property type="term" value="C:secretory granule"/>
    <property type="evidence" value="ECO:0000250"/>
    <property type="project" value="ParkinsonsUK-UCL"/>
</dbReference>
<dbReference type="GO" id="GO:0045202">
    <property type="term" value="C:synapse"/>
    <property type="evidence" value="ECO:0000250"/>
    <property type="project" value="ParkinsonsUK-UCL"/>
</dbReference>
<dbReference type="GO" id="GO:0008021">
    <property type="term" value="C:synaptic vesicle"/>
    <property type="evidence" value="ECO:0000304"/>
    <property type="project" value="ParkinsonsUK-UCL"/>
</dbReference>
<dbReference type="GO" id="GO:0030672">
    <property type="term" value="C:synaptic vesicle membrane"/>
    <property type="evidence" value="ECO:0000250"/>
    <property type="project" value="ParkinsonsUK-UCL"/>
</dbReference>
<dbReference type="GO" id="GO:0005509">
    <property type="term" value="F:calcium ion binding"/>
    <property type="evidence" value="ECO:0000250"/>
    <property type="project" value="UniProtKB"/>
</dbReference>
<dbReference type="GO" id="GO:0005544">
    <property type="term" value="F:calcium-dependent phospholipid binding"/>
    <property type="evidence" value="ECO:0000250"/>
    <property type="project" value="UniProtKB"/>
</dbReference>
<dbReference type="GO" id="GO:0070679">
    <property type="term" value="F:inositol 1,4,5 trisphosphate binding"/>
    <property type="evidence" value="ECO:0000250"/>
    <property type="project" value="ParkinsonsUK-UCL"/>
</dbReference>
<dbReference type="GO" id="GO:0042301">
    <property type="term" value="F:phosphate ion binding"/>
    <property type="evidence" value="ECO:0000250"/>
    <property type="project" value="ParkinsonsUK-UCL"/>
</dbReference>
<dbReference type="GO" id="GO:1901981">
    <property type="term" value="F:phosphatidylinositol phosphate binding"/>
    <property type="evidence" value="ECO:0000304"/>
    <property type="project" value="ParkinsonsUK-UCL"/>
</dbReference>
<dbReference type="GO" id="GO:0005546">
    <property type="term" value="F:phosphatidylinositol-4,5-bisphosphate binding"/>
    <property type="evidence" value="ECO:0000250"/>
    <property type="project" value="ParkinsonsUK-UCL"/>
</dbReference>
<dbReference type="GO" id="GO:0044877">
    <property type="term" value="F:protein-containing complex binding"/>
    <property type="evidence" value="ECO:0000250"/>
    <property type="project" value="ParkinsonsUK-UCL"/>
</dbReference>
<dbReference type="GO" id="GO:0008430">
    <property type="term" value="F:selenium binding"/>
    <property type="evidence" value="ECO:0000250"/>
    <property type="project" value="ParkinsonsUK-UCL"/>
</dbReference>
<dbReference type="GO" id="GO:0031267">
    <property type="term" value="F:small GTPase binding"/>
    <property type="evidence" value="ECO:0007669"/>
    <property type="project" value="InterPro"/>
</dbReference>
<dbReference type="GO" id="GO:0008270">
    <property type="term" value="F:zinc ion binding"/>
    <property type="evidence" value="ECO:0000250"/>
    <property type="project" value="ParkinsonsUK-UCL"/>
</dbReference>
<dbReference type="GO" id="GO:0099502">
    <property type="term" value="P:calcium-dependent activation of synaptic vesicle fusion"/>
    <property type="evidence" value="ECO:0000318"/>
    <property type="project" value="GO_Central"/>
</dbReference>
<dbReference type="GO" id="GO:0006886">
    <property type="term" value="P:intracellular protein transport"/>
    <property type="evidence" value="ECO:0007669"/>
    <property type="project" value="InterPro"/>
</dbReference>
<dbReference type="GO" id="GO:0045956">
    <property type="term" value="P:positive regulation of calcium ion-dependent exocytosis"/>
    <property type="evidence" value="ECO:0000318"/>
    <property type="project" value="GO_Central"/>
</dbReference>
<dbReference type="GO" id="GO:0061669">
    <property type="term" value="P:spontaneous neurotransmitter secretion"/>
    <property type="evidence" value="ECO:0007669"/>
    <property type="project" value="Ensembl"/>
</dbReference>
<dbReference type="GO" id="GO:0016082">
    <property type="term" value="P:synaptic vesicle priming"/>
    <property type="evidence" value="ECO:0007669"/>
    <property type="project" value="Ensembl"/>
</dbReference>
<dbReference type="CDD" id="cd04035">
    <property type="entry name" value="C2A_Rabphilin_Doc2"/>
    <property type="match status" value="1"/>
</dbReference>
<dbReference type="CDD" id="cd08384">
    <property type="entry name" value="C2B_Rabphilin_Doc2"/>
    <property type="match status" value="1"/>
</dbReference>
<dbReference type="CDD" id="cd15762">
    <property type="entry name" value="FYVE_RP3A"/>
    <property type="match status" value="1"/>
</dbReference>
<dbReference type="FunFam" id="2.60.40.150:FF:000032">
    <property type="entry name" value="Double c2-like domain-containing"/>
    <property type="match status" value="1"/>
</dbReference>
<dbReference type="FunFam" id="2.60.40.150:FF:000023">
    <property type="entry name" value="Double C2-like domain-containing protein"/>
    <property type="match status" value="1"/>
</dbReference>
<dbReference type="FunFam" id="3.30.40.10:FF:000182">
    <property type="entry name" value="rabphilin-3A isoform X1"/>
    <property type="match status" value="1"/>
</dbReference>
<dbReference type="Gene3D" id="2.60.40.150">
    <property type="entry name" value="C2 domain"/>
    <property type="match status" value="2"/>
</dbReference>
<dbReference type="Gene3D" id="3.30.40.10">
    <property type="entry name" value="Zinc/RING finger domain, C3HC4 (zinc finger)"/>
    <property type="match status" value="1"/>
</dbReference>
<dbReference type="InterPro" id="IPR000008">
    <property type="entry name" value="C2_dom"/>
</dbReference>
<dbReference type="InterPro" id="IPR035892">
    <property type="entry name" value="C2_domain_sf"/>
</dbReference>
<dbReference type="InterPro" id="IPR041282">
    <property type="entry name" value="FYVE_2"/>
</dbReference>
<dbReference type="InterPro" id="IPR028698">
    <property type="entry name" value="FYVE_RPH3A"/>
</dbReference>
<dbReference type="InterPro" id="IPR010911">
    <property type="entry name" value="Rab_BD"/>
</dbReference>
<dbReference type="InterPro" id="IPR043566">
    <property type="entry name" value="Rabphilin/DOC2/Noc2"/>
</dbReference>
<dbReference type="InterPro" id="IPR047022">
    <property type="entry name" value="Rabphilin_Doc2_C2A"/>
</dbReference>
<dbReference type="InterPro" id="IPR001565">
    <property type="entry name" value="Synaptotagmin"/>
</dbReference>
<dbReference type="InterPro" id="IPR017455">
    <property type="entry name" value="Znf_FYVE-rel"/>
</dbReference>
<dbReference type="InterPro" id="IPR011011">
    <property type="entry name" value="Znf_FYVE_PHD"/>
</dbReference>
<dbReference type="InterPro" id="IPR013083">
    <property type="entry name" value="Znf_RING/FYVE/PHD"/>
</dbReference>
<dbReference type="PANTHER" id="PTHR45729">
    <property type="entry name" value="RABPHILIN, ISOFORM A"/>
    <property type="match status" value="1"/>
</dbReference>
<dbReference type="PANTHER" id="PTHR45729:SF3">
    <property type="entry name" value="RABPHILIN-3A"/>
    <property type="match status" value="1"/>
</dbReference>
<dbReference type="Pfam" id="PF00168">
    <property type="entry name" value="C2"/>
    <property type="match status" value="2"/>
</dbReference>
<dbReference type="Pfam" id="PF02318">
    <property type="entry name" value="FYVE_2"/>
    <property type="match status" value="1"/>
</dbReference>
<dbReference type="PRINTS" id="PR00360">
    <property type="entry name" value="C2DOMAIN"/>
</dbReference>
<dbReference type="PRINTS" id="PR00399">
    <property type="entry name" value="SYNAPTOTAGMN"/>
</dbReference>
<dbReference type="SMART" id="SM00239">
    <property type="entry name" value="C2"/>
    <property type="match status" value="2"/>
</dbReference>
<dbReference type="SUPFAM" id="SSF49562">
    <property type="entry name" value="C2 domain (Calcium/lipid-binding domain, CaLB)"/>
    <property type="match status" value="2"/>
</dbReference>
<dbReference type="SUPFAM" id="SSF57903">
    <property type="entry name" value="FYVE/PHD zinc finger"/>
    <property type="match status" value="1"/>
</dbReference>
<dbReference type="PROSITE" id="PS50004">
    <property type="entry name" value="C2"/>
    <property type="match status" value="2"/>
</dbReference>
<dbReference type="PROSITE" id="PS50916">
    <property type="entry name" value="RABBD"/>
    <property type="match status" value="1"/>
</dbReference>
<dbReference type="PROSITE" id="PS50178">
    <property type="entry name" value="ZF_FYVE"/>
    <property type="match status" value="1"/>
</dbReference>
<sequence>MTDTVFSNSSNRWMYPSDRPLQSNDKEQLQAGWSVHPGGQPDRQRKQEELTDEEKEIINRVIARAEKMEEMEQERIGRLVDRLENMRKNVAGDGVNRCILCGEQLGMLGSACVVCEDCKKNVCTKCGVETNNRLHSVWLCKICIEQREVWKRSGAWFFKGFPKQVLPQPMPIKKTKPQQPVSEPAAPEQPAPEPKHPARAPARGDSEDRRGPGQKTGPDPASAPGRGNYGPPVRRASEARMSSSSRDSESWDHSGGAGDSSRSPAGLRRANSVQASRPAPGSVQSPAPPQPGQPGTPGGSRPGPGPAGRFPDQKPEVAPSDPGTTAPPREERTGGVGGYPAVGAREDRMSHPSGPYSQASAAAPQPAAARQPPPPEEEEEEANSYDSDEATTLGALEFSLLYDQDNSSLQCTIIKAKGLKPMDSNGLADPYVKLHLLPGASKSNKLRTKTLRNTRNPIWNETLVYHGITDEDMQRKTLRISVCDEDKFGHNEFIGETRFSLKKLKPNQRKNFNICLERVIPMKRAGTTGSARGMALYEEEQVERVGDIEERGKILVSLMYSTQQGGLIVGIIRCVHLAAMDANGYSDPFVKLWLKPDMGKKAKHKTQIKKKTLNPEFNEEFFYDIKHSDLAKKSLDISVWDYDIGKSNDYIGGCQLGISAKGERLKHWYECLKNKDKKIERWHQLQNENHVSSD</sequence>
<protein>
    <recommendedName>
        <fullName>Rabphilin-3A</fullName>
    </recommendedName>
    <alternativeName>
        <fullName>Exophilin-1</fullName>
    </alternativeName>
</protein>
<comment type="function">
    <text evidence="3">Plays an essential role in docking and fusion steps of regulated exocytosis (By similarity). At the presynaptic level, RPH3A is recruited by RAB3A to the synaptic vesicle membrane in a GTP-dependent manner where it modulates synaptic vesicle trafficking and calcium-triggered neurotransmitter release (By similarity). In the post-synaptic compartment, forms a ternary complex with GRIN2A and DLG4 and regulates NMDA receptor stability. Also plays a role in the exocytosis of arginine vasopressin hormone (By similarity).</text>
</comment>
<comment type="cofactor">
    <cofactor evidence="4">
        <name>Ca(2+)</name>
        <dbReference type="ChEBI" id="CHEBI:29108"/>
    </cofactor>
</comment>
<comment type="subunit">
    <text evidence="2 3 8">Interacts with RAB3B, RAB3C, RAB3D, RAB8A, RAB27A and RAB27B (By similarity). Interacts with RAB3A; this interaction recruits RPH3A to synaptic vesicules (PubMed:15207266). Interacts (via C2B domain) with SNAP25 (By similarity). Interacts with deubiquitinating enzyme CAND1; this interaction results in the deubiquitination of RPH3A (By similarity). Interacts with GRIN2A and DLG4; this ternary complex regulates NMDA receptor composition at postsynaptic membranes (By similarity). Interacts with SNCA (PubMed:15207266).</text>
</comment>
<comment type="interaction">
    <interactant intactId="EBI-1216802">
        <id>Q9Y2J0</id>
    </interactant>
    <interactant intactId="EBI-1215506">
        <id>O14936</id>
        <label>CASK</label>
    </interactant>
    <organismsDiffer>false</organismsDiffer>
    <experiments>3</experiments>
</comment>
<comment type="interaction">
    <interactant intactId="EBI-16808141">
        <id>Q9Y2J0-2</id>
    </interactant>
    <interactant intactId="EBI-10179046">
        <id>O00194</id>
        <label>RAB27B</label>
    </interactant>
    <organismsDiffer>false</organismsDiffer>
    <experiments>3</experiments>
</comment>
<comment type="subcellular location">
    <subcellularLocation>
        <location evidence="3">Cytoplasmic vesicle</location>
        <location evidence="3">Secretory vesicle</location>
        <location evidence="3">Synaptic vesicle membrane</location>
    </subcellularLocation>
    <subcellularLocation>
        <location evidence="3">Cell projection</location>
        <location evidence="3">Dendritic spine</location>
    </subcellularLocation>
    <subcellularLocation>
        <location evidence="3">Postsynaptic cell membrane</location>
    </subcellularLocation>
    <subcellularLocation>
        <location evidence="3">Membrane</location>
        <topology evidence="3">Peripheral membrane protein</topology>
    </subcellularLocation>
</comment>
<comment type="alternative products">
    <event type="alternative splicing"/>
    <isoform>
        <id>Q9Y2J0-1</id>
        <name>1</name>
        <sequence type="displayed"/>
    </isoform>
    <isoform>
        <id>Q9Y2J0-2</id>
        <name>2</name>
        <sequence type="described" ref="VSP_021016"/>
    </isoform>
</comment>
<comment type="domain">
    <text evidence="1">Binds calcium via the C2 domains. The calcium-bound C2 domains mediate interactions with phospholipid bilayers (By similarity).</text>
</comment>
<comment type="PTM">
    <text evidence="3">Ubiquitinated. Deubiquitinated by CAND1 to prevent its degradation.</text>
</comment>
<comment type="sequence caution" evidence="10">
    <conflict type="erroneous initiation">
        <sequence resource="EMBL-CDS" id="BAA76829"/>
    </conflict>
</comment>
<reference key="1">
    <citation type="journal article" date="1999" name="DNA Res.">
        <title>Prediction of the coding sequences of unidentified human genes. XIII. The complete sequences of 100 new cDNA clones from brain which code for large proteins in vitro.</title>
        <authorList>
            <person name="Nagase T."/>
            <person name="Ishikawa K."/>
            <person name="Suyama M."/>
            <person name="Kikuno R."/>
            <person name="Hirosawa M."/>
            <person name="Miyajima N."/>
            <person name="Tanaka A."/>
            <person name="Kotani H."/>
            <person name="Nomura N."/>
            <person name="Ohara O."/>
        </authorList>
    </citation>
    <scope>NUCLEOTIDE SEQUENCE [LARGE SCALE MRNA] (ISOFORM 1)</scope>
    <source>
        <tissue>Brain</tissue>
    </source>
</reference>
<reference key="2">
    <citation type="journal article" date="2004" name="Nat. Genet.">
        <title>Complete sequencing and characterization of 21,243 full-length human cDNAs.</title>
        <authorList>
            <person name="Ota T."/>
            <person name="Suzuki Y."/>
            <person name="Nishikawa T."/>
            <person name="Otsuki T."/>
            <person name="Sugiyama T."/>
            <person name="Irie R."/>
            <person name="Wakamatsu A."/>
            <person name="Hayashi K."/>
            <person name="Sato H."/>
            <person name="Nagai K."/>
            <person name="Kimura K."/>
            <person name="Makita H."/>
            <person name="Sekine M."/>
            <person name="Obayashi M."/>
            <person name="Nishi T."/>
            <person name="Shibahara T."/>
            <person name="Tanaka T."/>
            <person name="Ishii S."/>
            <person name="Yamamoto J."/>
            <person name="Saito K."/>
            <person name="Kawai Y."/>
            <person name="Isono Y."/>
            <person name="Nakamura Y."/>
            <person name="Nagahari K."/>
            <person name="Murakami K."/>
            <person name="Yasuda T."/>
            <person name="Iwayanagi T."/>
            <person name="Wagatsuma M."/>
            <person name="Shiratori A."/>
            <person name="Sudo H."/>
            <person name="Hosoiri T."/>
            <person name="Kaku Y."/>
            <person name="Kodaira H."/>
            <person name="Kondo H."/>
            <person name="Sugawara M."/>
            <person name="Takahashi M."/>
            <person name="Kanda K."/>
            <person name="Yokoi T."/>
            <person name="Furuya T."/>
            <person name="Kikkawa E."/>
            <person name="Omura Y."/>
            <person name="Abe K."/>
            <person name="Kamihara K."/>
            <person name="Katsuta N."/>
            <person name="Sato K."/>
            <person name="Tanikawa M."/>
            <person name="Yamazaki M."/>
            <person name="Ninomiya K."/>
            <person name="Ishibashi T."/>
            <person name="Yamashita H."/>
            <person name="Murakawa K."/>
            <person name="Fujimori K."/>
            <person name="Tanai H."/>
            <person name="Kimata M."/>
            <person name="Watanabe M."/>
            <person name="Hiraoka S."/>
            <person name="Chiba Y."/>
            <person name="Ishida S."/>
            <person name="Ono Y."/>
            <person name="Takiguchi S."/>
            <person name="Watanabe S."/>
            <person name="Yosida M."/>
            <person name="Hotuta T."/>
            <person name="Kusano J."/>
            <person name="Kanehori K."/>
            <person name="Takahashi-Fujii A."/>
            <person name="Hara H."/>
            <person name="Tanase T.-O."/>
            <person name="Nomura Y."/>
            <person name="Togiya S."/>
            <person name="Komai F."/>
            <person name="Hara R."/>
            <person name="Takeuchi K."/>
            <person name="Arita M."/>
            <person name="Imose N."/>
            <person name="Musashino K."/>
            <person name="Yuuki H."/>
            <person name="Oshima A."/>
            <person name="Sasaki N."/>
            <person name="Aotsuka S."/>
            <person name="Yoshikawa Y."/>
            <person name="Matsunawa H."/>
            <person name="Ichihara T."/>
            <person name="Shiohata N."/>
            <person name="Sano S."/>
            <person name="Moriya S."/>
            <person name="Momiyama H."/>
            <person name="Satoh N."/>
            <person name="Takami S."/>
            <person name="Terashima Y."/>
            <person name="Suzuki O."/>
            <person name="Nakagawa S."/>
            <person name="Senoh A."/>
            <person name="Mizoguchi H."/>
            <person name="Goto Y."/>
            <person name="Shimizu F."/>
            <person name="Wakebe H."/>
            <person name="Hishigaki H."/>
            <person name="Watanabe T."/>
            <person name="Sugiyama A."/>
            <person name="Takemoto M."/>
            <person name="Kawakami B."/>
            <person name="Yamazaki M."/>
            <person name="Watanabe K."/>
            <person name="Kumagai A."/>
            <person name="Itakura S."/>
            <person name="Fukuzumi Y."/>
            <person name="Fujimori Y."/>
            <person name="Komiyama M."/>
            <person name="Tashiro H."/>
            <person name="Tanigami A."/>
            <person name="Fujiwara T."/>
            <person name="Ono T."/>
            <person name="Yamada K."/>
            <person name="Fujii Y."/>
            <person name="Ozaki K."/>
            <person name="Hirao M."/>
            <person name="Ohmori Y."/>
            <person name="Kawabata A."/>
            <person name="Hikiji T."/>
            <person name="Kobatake N."/>
            <person name="Inagaki H."/>
            <person name="Ikema Y."/>
            <person name="Okamoto S."/>
            <person name="Okitani R."/>
            <person name="Kawakami T."/>
            <person name="Noguchi S."/>
            <person name="Itoh T."/>
            <person name="Shigeta K."/>
            <person name="Senba T."/>
            <person name="Matsumura K."/>
            <person name="Nakajima Y."/>
            <person name="Mizuno T."/>
            <person name="Morinaga M."/>
            <person name="Sasaki M."/>
            <person name="Togashi T."/>
            <person name="Oyama M."/>
            <person name="Hata H."/>
            <person name="Watanabe M."/>
            <person name="Komatsu T."/>
            <person name="Mizushima-Sugano J."/>
            <person name="Satoh T."/>
            <person name="Shirai Y."/>
            <person name="Takahashi Y."/>
            <person name="Nakagawa K."/>
            <person name="Okumura K."/>
            <person name="Nagase T."/>
            <person name="Nomura N."/>
            <person name="Kikuchi H."/>
            <person name="Masuho Y."/>
            <person name="Yamashita R."/>
            <person name="Nakai K."/>
            <person name="Yada T."/>
            <person name="Nakamura Y."/>
            <person name="Ohara O."/>
            <person name="Isogai T."/>
            <person name="Sugano S."/>
        </authorList>
    </citation>
    <scope>NUCLEOTIDE SEQUENCE [LARGE SCALE MRNA] (ISOFORM 1)</scope>
    <source>
        <tissue>Hippocampus</tissue>
    </source>
</reference>
<reference key="3">
    <citation type="journal article" date="2004" name="Genome Res.">
        <title>The status, quality, and expansion of the NIH full-length cDNA project: the Mammalian Gene Collection (MGC).</title>
        <authorList>
            <consortium name="The MGC Project Team"/>
        </authorList>
    </citation>
    <scope>NUCLEOTIDE SEQUENCE [LARGE SCALE MRNA] (ISOFORM 2)</scope>
    <source>
        <tissue>Brain</tissue>
    </source>
</reference>
<reference key="4">
    <citation type="journal article" date="2004" name="Neurobiol. Dis.">
        <title>Abnormal alpha-synuclein interactions with rab3a and rabphilin in diffuse Lewy body disease.</title>
        <authorList>
            <person name="Dalfo E."/>
            <person name="Barrachina M."/>
            <person name="Rosa J.L."/>
            <person name="Ambrosio S."/>
            <person name="Ferrer I."/>
        </authorList>
    </citation>
    <scope>INTERACTION WITH SNCA AND RAB3A</scope>
</reference>